<feature type="transit peptide" description="Mitochondrion" evidence="4">
    <location>
        <begin position="1"/>
        <end position="27"/>
    </location>
</feature>
<feature type="chain" id="PRO_0000393700" description="Iron-sulfur cluster assembly 2 homolog, mitochondrial">
    <location>
        <begin position="28"/>
        <end position="209"/>
    </location>
</feature>
<feature type="binding site" evidence="2">
    <location>
        <position position="134"/>
    </location>
    <ligand>
        <name>Fe cation</name>
        <dbReference type="ChEBI" id="CHEBI:24875"/>
    </ligand>
</feature>
<feature type="binding site" evidence="2">
    <location>
        <position position="199"/>
    </location>
    <ligand>
        <name>Fe cation</name>
        <dbReference type="ChEBI" id="CHEBI:24875"/>
    </ligand>
</feature>
<feature type="binding site" evidence="2">
    <location>
        <position position="201"/>
    </location>
    <ligand>
        <name>Fe cation</name>
        <dbReference type="ChEBI" id="CHEBI:24875"/>
    </ligand>
</feature>
<evidence type="ECO:0000250" key="1"/>
<evidence type="ECO:0000250" key="2">
    <source>
        <dbReference type="UniProtKB" id="P0AAC8"/>
    </source>
</evidence>
<evidence type="ECO:0000250" key="3">
    <source>
        <dbReference type="UniProtKB" id="Q86U28"/>
    </source>
</evidence>
<evidence type="ECO:0000255" key="4"/>
<evidence type="ECO:0000305" key="5"/>
<proteinExistence type="inferred from homology"/>
<name>ISCA2_DICDI</name>
<protein>
    <recommendedName>
        <fullName>Iron-sulfur cluster assembly 2 homolog, mitochondrial</fullName>
    </recommendedName>
    <alternativeName>
        <fullName>Iron-sulfur assembly protein isca2</fullName>
    </alternativeName>
</protein>
<comment type="function">
    <text evidence="3">Involved in the maturation of mitochondrial 4Fe-4S proteins functioning late in the iron-sulfur cluster assembly pathway. May be involved in the binding of an intermediate of Fe/S cluster assembly.</text>
</comment>
<comment type="cofactor">
    <cofactor evidence="1">
        <name>Fe cation</name>
        <dbReference type="ChEBI" id="CHEBI:24875"/>
    </cofactor>
    <text evidence="1">Binds 2 iron ions per dimer.</text>
</comment>
<comment type="subcellular location">
    <subcellularLocation>
        <location evidence="3">Mitochondrion</location>
    </subcellularLocation>
</comment>
<comment type="similarity">
    <text evidence="5">Belongs to the HesB/IscA family.</text>
</comment>
<sequence>MIRSIFKKNSSLPYFLKRSFITKPHSIITPIINNNNHNNNNINTPIKNIQSFNFKFFTTTTTSNPIHQQTTTTTTTTPSTEQQQLSKEAEEINENITKYNITLTDSCVKELNSVQKKSDSTDIFLRVMVDMGGCSGYQYIIKVENKLQDDDVLFIRNGAKVIIDKISLEMMEGSIIDYETALMRSSFVVASNPNTIKSCGCKISFELKK</sequence>
<keyword id="KW-0408">Iron</keyword>
<keyword id="KW-0411">Iron-sulfur</keyword>
<keyword id="KW-0479">Metal-binding</keyword>
<keyword id="KW-0496">Mitochondrion</keyword>
<keyword id="KW-1185">Reference proteome</keyword>
<keyword id="KW-0809">Transit peptide</keyword>
<gene>
    <name type="primary">isca2</name>
    <name type="ORF">DDB_G0284809</name>
</gene>
<accession>Q54P40</accession>
<reference key="1">
    <citation type="journal article" date="2005" name="Nature">
        <title>The genome of the social amoeba Dictyostelium discoideum.</title>
        <authorList>
            <person name="Eichinger L."/>
            <person name="Pachebat J.A."/>
            <person name="Gloeckner G."/>
            <person name="Rajandream M.A."/>
            <person name="Sucgang R."/>
            <person name="Berriman M."/>
            <person name="Song J."/>
            <person name="Olsen R."/>
            <person name="Szafranski K."/>
            <person name="Xu Q."/>
            <person name="Tunggal B."/>
            <person name="Kummerfeld S."/>
            <person name="Madera M."/>
            <person name="Konfortov B.A."/>
            <person name="Rivero F."/>
            <person name="Bankier A.T."/>
            <person name="Lehmann R."/>
            <person name="Hamlin N."/>
            <person name="Davies R."/>
            <person name="Gaudet P."/>
            <person name="Fey P."/>
            <person name="Pilcher K."/>
            <person name="Chen G."/>
            <person name="Saunders D."/>
            <person name="Sodergren E.J."/>
            <person name="Davis P."/>
            <person name="Kerhornou A."/>
            <person name="Nie X."/>
            <person name="Hall N."/>
            <person name="Anjard C."/>
            <person name="Hemphill L."/>
            <person name="Bason N."/>
            <person name="Farbrother P."/>
            <person name="Desany B."/>
            <person name="Just E."/>
            <person name="Morio T."/>
            <person name="Rost R."/>
            <person name="Churcher C.M."/>
            <person name="Cooper J."/>
            <person name="Haydock S."/>
            <person name="van Driessche N."/>
            <person name="Cronin A."/>
            <person name="Goodhead I."/>
            <person name="Muzny D.M."/>
            <person name="Mourier T."/>
            <person name="Pain A."/>
            <person name="Lu M."/>
            <person name="Harper D."/>
            <person name="Lindsay R."/>
            <person name="Hauser H."/>
            <person name="James K.D."/>
            <person name="Quiles M."/>
            <person name="Madan Babu M."/>
            <person name="Saito T."/>
            <person name="Buchrieser C."/>
            <person name="Wardroper A."/>
            <person name="Felder M."/>
            <person name="Thangavelu M."/>
            <person name="Johnson D."/>
            <person name="Knights A."/>
            <person name="Loulseged H."/>
            <person name="Mungall K.L."/>
            <person name="Oliver K."/>
            <person name="Price C."/>
            <person name="Quail M.A."/>
            <person name="Urushihara H."/>
            <person name="Hernandez J."/>
            <person name="Rabbinowitsch E."/>
            <person name="Steffen D."/>
            <person name="Sanders M."/>
            <person name="Ma J."/>
            <person name="Kohara Y."/>
            <person name="Sharp S."/>
            <person name="Simmonds M.N."/>
            <person name="Spiegler S."/>
            <person name="Tivey A."/>
            <person name="Sugano S."/>
            <person name="White B."/>
            <person name="Walker D."/>
            <person name="Woodward J.R."/>
            <person name="Winckler T."/>
            <person name="Tanaka Y."/>
            <person name="Shaulsky G."/>
            <person name="Schleicher M."/>
            <person name="Weinstock G.M."/>
            <person name="Rosenthal A."/>
            <person name="Cox E.C."/>
            <person name="Chisholm R.L."/>
            <person name="Gibbs R.A."/>
            <person name="Loomis W.F."/>
            <person name="Platzer M."/>
            <person name="Kay R.R."/>
            <person name="Williams J.G."/>
            <person name="Dear P.H."/>
            <person name="Noegel A.A."/>
            <person name="Barrell B.G."/>
            <person name="Kuspa A."/>
        </authorList>
    </citation>
    <scope>NUCLEOTIDE SEQUENCE [LARGE SCALE GENOMIC DNA]</scope>
    <source>
        <strain>AX4</strain>
    </source>
</reference>
<dbReference type="EMBL" id="AAFI02000071">
    <property type="protein sequence ID" value="EAL65057.1"/>
    <property type="molecule type" value="Genomic_DNA"/>
</dbReference>
<dbReference type="RefSeq" id="XP_638418.1">
    <property type="nucleotide sequence ID" value="XM_633326.1"/>
</dbReference>
<dbReference type="SMR" id="Q54P40"/>
<dbReference type="FunCoup" id="Q54P40">
    <property type="interactions" value="73"/>
</dbReference>
<dbReference type="STRING" id="44689.Q54P40"/>
<dbReference type="PaxDb" id="44689-DDB0235144"/>
<dbReference type="EnsemblProtists" id="EAL65057">
    <property type="protein sequence ID" value="EAL65057"/>
    <property type="gene ID" value="DDB_G0284809"/>
</dbReference>
<dbReference type="GeneID" id="8624788"/>
<dbReference type="KEGG" id="ddi:DDB_G0284809"/>
<dbReference type="dictyBase" id="DDB_G0284809">
    <property type="gene designation" value="isca2"/>
</dbReference>
<dbReference type="VEuPathDB" id="AmoebaDB:DDB_G0284809"/>
<dbReference type="eggNOG" id="KOG1119">
    <property type="taxonomic scope" value="Eukaryota"/>
</dbReference>
<dbReference type="HOGENOM" id="CLU_069054_1_0_1"/>
<dbReference type="InParanoid" id="Q54P40"/>
<dbReference type="OMA" id="IHGKTNL"/>
<dbReference type="PhylomeDB" id="Q54P40"/>
<dbReference type="Reactome" id="R-DDI-1362409">
    <property type="pathway name" value="Mitochondrial iron-sulfur cluster biogenesis"/>
</dbReference>
<dbReference type="PRO" id="PR:Q54P40"/>
<dbReference type="Proteomes" id="UP000002195">
    <property type="component" value="Chromosome 4"/>
</dbReference>
<dbReference type="GO" id="GO:0005739">
    <property type="term" value="C:mitochondrion"/>
    <property type="evidence" value="ECO:0000318"/>
    <property type="project" value="GO_Central"/>
</dbReference>
<dbReference type="GO" id="GO:0051537">
    <property type="term" value="F:2 iron, 2 sulfur cluster binding"/>
    <property type="evidence" value="ECO:0000318"/>
    <property type="project" value="GO_Central"/>
</dbReference>
<dbReference type="GO" id="GO:0051539">
    <property type="term" value="F:4 iron, 4 sulfur cluster binding"/>
    <property type="evidence" value="ECO:0000318"/>
    <property type="project" value="GO_Central"/>
</dbReference>
<dbReference type="GO" id="GO:0005506">
    <property type="term" value="F:iron ion binding"/>
    <property type="evidence" value="ECO:0000318"/>
    <property type="project" value="GO_Central"/>
</dbReference>
<dbReference type="GO" id="GO:0016226">
    <property type="term" value="P:iron-sulfur cluster assembly"/>
    <property type="evidence" value="ECO:0000318"/>
    <property type="project" value="GO_Central"/>
</dbReference>
<dbReference type="FunFam" id="2.60.300.12:FF:000006">
    <property type="entry name" value="Iron-sulfur cluster assembly 2 mitochondrial"/>
    <property type="match status" value="1"/>
</dbReference>
<dbReference type="Gene3D" id="2.60.300.12">
    <property type="entry name" value="HesB-like domain"/>
    <property type="match status" value="1"/>
</dbReference>
<dbReference type="InterPro" id="IPR000361">
    <property type="entry name" value="FeS_biogenesis"/>
</dbReference>
<dbReference type="InterPro" id="IPR016092">
    <property type="entry name" value="FeS_cluster_insertion"/>
</dbReference>
<dbReference type="InterPro" id="IPR035903">
    <property type="entry name" value="HesB-like_dom_sf"/>
</dbReference>
<dbReference type="NCBIfam" id="TIGR00049">
    <property type="entry name" value="iron-sulfur cluster assembly accessory protein"/>
    <property type="match status" value="1"/>
</dbReference>
<dbReference type="PANTHER" id="PTHR43011">
    <property type="entry name" value="IRON-SULFUR CLUSTER ASSEMBLY 2 HOMOLOG, MITOCHONDRIAL"/>
    <property type="match status" value="1"/>
</dbReference>
<dbReference type="PANTHER" id="PTHR43011:SF1">
    <property type="entry name" value="IRON-SULFUR CLUSTER ASSEMBLY 2 HOMOLOG, MITOCHONDRIAL"/>
    <property type="match status" value="1"/>
</dbReference>
<dbReference type="Pfam" id="PF01521">
    <property type="entry name" value="Fe-S_biosyn"/>
    <property type="match status" value="1"/>
</dbReference>
<dbReference type="SUPFAM" id="SSF89360">
    <property type="entry name" value="HesB-like domain"/>
    <property type="match status" value="1"/>
</dbReference>
<organism>
    <name type="scientific">Dictyostelium discoideum</name>
    <name type="common">Social amoeba</name>
    <dbReference type="NCBI Taxonomy" id="44689"/>
    <lineage>
        <taxon>Eukaryota</taxon>
        <taxon>Amoebozoa</taxon>
        <taxon>Evosea</taxon>
        <taxon>Eumycetozoa</taxon>
        <taxon>Dictyostelia</taxon>
        <taxon>Dictyosteliales</taxon>
        <taxon>Dictyosteliaceae</taxon>
        <taxon>Dictyostelium</taxon>
    </lineage>
</organism>